<evidence type="ECO:0000269" key="1">
    <source>
    </source>
</evidence>
<evidence type="ECO:0000305" key="2"/>
<evidence type="ECO:0007829" key="3">
    <source>
        <dbReference type="PDB" id="4UXG"/>
    </source>
</evidence>
<evidence type="ECO:0007829" key="4">
    <source>
        <dbReference type="PDB" id="5NXF"/>
    </source>
</evidence>
<evidence type="ECO:0007829" key="5">
    <source>
        <dbReference type="PDB" id="5NXH"/>
    </source>
</evidence>
<keyword id="KW-0002">3D-structure</keyword>
<keyword id="KW-0426">Late protein</keyword>
<keyword id="KW-1185">Reference proteome</keyword>
<keyword id="KW-1230">Viral tail fiber protein</keyword>
<keyword id="KW-1227">Viral tail protein</keyword>
<keyword id="KW-0946">Virion</keyword>
<sequence length="1289" mass="140404">MAEIKREFRAEDGLDAGGDKIINVALADRTVGTDGVNVDYLIQENTVQQYDPTRGYLKDFVIIYDNRFWAAINDIPKPAGAFNSGRWRALRTDANWITVSSGSYQLKSGEAISVNTAAGNDITFTLPSSPIDGDTIVLQDIGGKPGVNQVLIVAPVQSIVNFRGEQVRSVLMTHPKSQLVLIFSNRLWQMYVADYSREAIVVTPANTYQAQSNDFIVRRFTSAAPINVKLPRFANHGDIINFVDLDKLNPLYHTIVTTYDETTSVQEVGTHSIEGRTSIDGFLMFDDNEKLWRLFDGDSKARLRIITTNSNIRPNEEVMVFGANNGTTQTIELKLPTNISVGDTVKISMNYMRKGQTVKIKAADEDKIASSVQLLQFPKRSEYPPEAEWVTVQELVFNDETNYVPVLELAYIEDSDGKYWVVQQNVPTVERVDSLNDSTRARLGVIALATQAQANVDLENSPQKELAITPETLANRTATETRRGIARIATTAQVNQNTTFSFADDIIITPKKLNERTATETRRGVAEIATQQETNAGTDDTTIITPKKLQARQGSESLSGIVTFVSTAGATPASSRELNGTNVYNKNTDNLVVSPKALDQYKATPTQQGAVILAVESEVIAGQSQQGWANAVVTPETLHKKTSTDGRIGLIEIATQSEVNTGTDYTRAVTPKTLNDRRATESLSGIAEIATQVEFDAGVDDTRISTPLKIKTRFNSTDRTSVVALSGLVESGTLWDHYTLNILEANETQRGTLRVATQVEAAAGTLDNVLITPKKLLGTKSTEAQEGVIKVATQSETVTGTSANTAVSPKNLKWIAQSEPTWAATTAIRGFVKTSSGSITFVGNDTVGSTQDLELYEKNSYAVSPYELNRVLANYLPLKAKAADTNLLDGLDSSQFIRRDIAQTVNGSLTLTQQTNLSAPLVSSSTGEFGGSLAANRTFTIRNTGAPTSIVFEKGPASGANPAQSMSIRVWGNQFGGGSDTTRSTVFEVGDDTSHHFYSQRNKDGNIAFNINGTVMPININASGLMNVNGTATFGRSVTANGEFISKSANAFRAINGDYGFFIRNDASNTYFLLTAAGDQTGGFNGLRPLLINNQSGQITIGEGLIIAKGVTINSGGLTVNSRIRSQGTKTSDLYTRAPTSDTVGFWSIDINDSATYNQFPGYFKMVEKTNEVTGLPYLERGEEVKSPGTLTQFGNTLDSLYQDWITYPTTPEARTTRWTRTWQKTKNSWSSFVQVFDGGNPPQPSDIGALPSDNATMGNLTIRDFLRIGNVRIVPDPVNKTVKFEWVE</sequence>
<feature type="chain" id="PRO_0000165020" description="Long-tail fiber proximal subunit">
    <location>
        <begin position="1"/>
        <end position="1289"/>
    </location>
</feature>
<feature type="strand" evidence="5">
    <location>
        <begin position="747"/>
        <end position="749"/>
    </location>
</feature>
<feature type="helix" evidence="5">
    <location>
        <begin position="758"/>
        <end position="763"/>
    </location>
</feature>
<feature type="strand" evidence="5">
    <location>
        <begin position="767"/>
        <end position="770"/>
    </location>
</feature>
<feature type="helix" evidence="5">
    <location>
        <begin position="773"/>
        <end position="778"/>
    </location>
</feature>
<feature type="strand" evidence="5">
    <location>
        <begin position="787"/>
        <end position="789"/>
    </location>
</feature>
<feature type="turn" evidence="4">
    <location>
        <begin position="796"/>
        <end position="799"/>
    </location>
</feature>
<feature type="strand" evidence="5">
    <location>
        <begin position="803"/>
        <end position="806"/>
    </location>
</feature>
<feature type="helix" evidence="4">
    <location>
        <begin position="809"/>
        <end position="817"/>
    </location>
</feature>
<feature type="helix" evidence="4">
    <location>
        <begin position="820"/>
        <end position="822"/>
    </location>
</feature>
<feature type="strand" evidence="4">
    <location>
        <begin position="826"/>
        <end position="828"/>
    </location>
</feature>
<feature type="strand" evidence="4">
    <location>
        <begin position="830"/>
        <end position="834"/>
    </location>
</feature>
<feature type="helix" evidence="4">
    <location>
        <begin position="837"/>
        <end position="839"/>
    </location>
</feature>
<feature type="turn" evidence="4">
    <location>
        <begin position="845"/>
        <end position="847"/>
    </location>
</feature>
<feature type="helix" evidence="4">
    <location>
        <begin position="853"/>
        <end position="855"/>
    </location>
</feature>
<feature type="strand" evidence="4">
    <location>
        <begin position="858"/>
        <end position="862"/>
    </location>
</feature>
<feature type="helix" evidence="4">
    <location>
        <begin position="865"/>
        <end position="872"/>
    </location>
</feature>
<feature type="strand" evidence="4">
    <location>
        <begin position="880"/>
        <end position="886"/>
    </location>
</feature>
<feature type="helix" evidence="4">
    <location>
        <begin position="893"/>
        <end position="895"/>
    </location>
</feature>
<feature type="strand" evidence="4">
    <location>
        <begin position="898"/>
        <end position="901"/>
    </location>
</feature>
<feature type="strand" evidence="4">
    <location>
        <begin position="903"/>
        <end position="905"/>
    </location>
</feature>
<feature type="strand" evidence="4">
    <location>
        <begin position="909"/>
        <end position="911"/>
    </location>
</feature>
<feature type="strand" evidence="4">
    <location>
        <begin position="915"/>
        <end position="919"/>
    </location>
</feature>
<feature type="strand" evidence="4">
    <location>
        <begin position="921"/>
        <end position="925"/>
    </location>
</feature>
<feature type="strand" evidence="4">
    <location>
        <begin position="927"/>
        <end position="931"/>
    </location>
</feature>
<feature type="strand" evidence="4">
    <location>
        <begin position="933"/>
        <end position="942"/>
    </location>
</feature>
<feature type="strand" evidence="4">
    <location>
        <begin position="944"/>
        <end position="946"/>
    </location>
</feature>
<feature type="strand" evidence="4">
    <location>
        <begin position="948"/>
        <end position="952"/>
    </location>
</feature>
<feature type="strand" evidence="4">
    <location>
        <begin position="956"/>
        <end position="958"/>
    </location>
</feature>
<feature type="strand" evidence="4">
    <location>
        <begin position="966"/>
        <end position="971"/>
    </location>
</feature>
<feature type="turn" evidence="3">
    <location>
        <begin position="974"/>
        <end position="976"/>
    </location>
</feature>
<feature type="strand" evidence="4">
    <location>
        <begin position="983"/>
        <end position="993"/>
    </location>
</feature>
<feature type="strand" evidence="4">
    <location>
        <begin position="995"/>
        <end position="1002"/>
    </location>
</feature>
<feature type="strand" evidence="4">
    <location>
        <begin position="1007"/>
        <end position="1016"/>
    </location>
</feature>
<feature type="strand" evidence="4">
    <location>
        <begin position="1020"/>
        <end position="1024"/>
    </location>
</feature>
<feature type="strand" evidence="4">
    <location>
        <begin position="1026"/>
        <end position="1028"/>
    </location>
</feature>
<feature type="strand" evidence="4">
    <location>
        <begin position="1032"/>
        <end position="1036"/>
    </location>
</feature>
<feature type="strand" evidence="4">
    <location>
        <begin position="1038"/>
        <end position="1042"/>
    </location>
</feature>
<feature type="strand" evidence="4">
    <location>
        <begin position="1044"/>
        <end position="1046"/>
    </location>
</feature>
<feature type="strand" evidence="4">
    <location>
        <begin position="1048"/>
        <end position="1056"/>
    </location>
</feature>
<feature type="strand" evidence="4">
    <location>
        <begin position="1059"/>
        <end position="1065"/>
    </location>
</feature>
<feature type="strand" evidence="4">
    <location>
        <begin position="1067"/>
        <end position="1074"/>
    </location>
</feature>
<feature type="strand" evidence="4">
    <location>
        <begin position="1090"/>
        <end position="1093"/>
    </location>
</feature>
<feature type="turn" evidence="4">
    <location>
        <begin position="1094"/>
        <end position="1096"/>
    </location>
</feature>
<feature type="strand" evidence="4">
    <location>
        <begin position="1099"/>
        <end position="1101"/>
    </location>
</feature>
<feature type="strand" evidence="4">
    <location>
        <begin position="1105"/>
        <end position="1107"/>
    </location>
</feature>
<feature type="strand" evidence="4">
    <location>
        <begin position="1111"/>
        <end position="1113"/>
    </location>
</feature>
<feature type="strand" evidence="4">
    <location>
        <begin position="1118"/>
        <end position="1122"/>
    </location>
</feature>
<feature type="strand" evidence="4">
    <location>
        <begin position="1124"/>
        <end position="1127"/>
    </location>
</feature>
<feature type="turn" evidence="4">
    <location>
        <begin position="1132"/>
        <end position="1136"/>
    </location>
</feature>
<feature type="turn" evidence="4">
    <location>
        <begin position="1141"/>
        <end position="1143"/>
    </location>
</feature>
<feature type="strand" evidence="4">
    <location>
        <begin position="1145"/>
        <end position="1151"/>
    </location>
</feature>
<feature type="helix" evidence="4">
    <location>
        <begin position="1154"/>
        <end position="1157"/>
    </location>
</feature>
<feature type="strand" evidence="4">
    <location>
        <begin position="1163"/>
        <end position="1170"/>
    </location>
</feature>
<feature type="turn" evidence="4">
    <location>
        <begin position="1172"/>
        <end position="1174"/>
    </location>
</feature>
<feature type="strand" evidence="4">
    <location>
        <begin position="1177"/>
        <end position="1185"/>
    </location>
</feature>
<feature type="strand" evidence="4">
    <location>
        <begin position="1189"/>
        <end position="1194"/>
    </location>
</feature>
<feature type="strand" evidence="4">
    <location>
        <begin position="1196"/>
        <end position="1200"/>
    </location>
</feature>
<feature type="strand" evidence="4">
    <location>
        <begin position="1202"/>
        <end position="1207"/>
    </location>
</feature>
<feature type="strand" evidence="4">
    <location>
        <begin position="1218"/>
        <end position="1224"/>
    </location>
</feature>
<feature type="helix" evidence="4">
    <location>
        <begin position="1225"/>
        <end position="1227"/>
    </location>
</feature>
<feature type="strand" evidence="4">
    <location>
        <begin position="1234"/>
        <end position="1236"/>
    </location>
</feature>
<feature type="helix" evidence="4">
    <location>
        <begin position="1245"/>
        <end position="1248"/>
    </location>
</feature>
<feature type="strand" evidence="4">
    <location>
        <begin position="1252"/>
        <end position="1269"/>
    </location>
</feature>
<feature type="strand" evidence="4">
    <location>
        <begin position="1272"/>
        <end position="1277"/>
    </location>
</feature>
<feature type="helix" evidence="4">
    <location>
        <begin position="1278"/>
        <end position="1280"/>
    </location>
</feature>
<feature type="strand" evidence="4">
    <location>
        <begin position="1282"/>
        <end position="1287"/>
    </location>
</feature>
<reference key="1">
    <citation type="journal article" date="2003" name="Microbiol. Mol. Biol. Rev.">
        <title>Bacteriophage T4 genome.</title>
        <authorList>
            <person name="Miller E.S."/>
            <person name="Kutter E."/>
            <person name="Mosig G."/>
            <person name="Arisaka F."/>
            <person name="Kunisawa T."/>
            <person name="Ruger W."/>
        </authorList>
    </citation>
    <scope>NUCLEOTIDE SEQUENCE [LARGE SCALE GENOMIC DNA]</scope>
</reference>
<reference key="2">
    <citation type="journal article" date="1989" name="Nucleic Acids Res.">
        <title>Organization of the bacteriophage T4 genome between map positions 150.745 and 145.824.</title>
        <authorList>
            <person name="Hahn S."/>
            <person name="Rueger W."/>
        </authorList>
    </citation>
    <scope>NUCLEOTIDE SEQUENCE [GENOMIC DNA] OF 1-694</scope>
    <source>
        <strain>BK536</strain>
    </source>
</reference>
<reference key="3">
    <citation type="journal article" date="1996" name="J. Mol. Biol.">
        <title>Stoichiometry and domainal organization of the long tail-fiber of bacteriophage T4: a hinged viral adhesin.</title>
        <authorList>
            <person name="Cerritelli M.E."/>
            <person name="Wall J.S."/>
            <person name="Simon M.N."/>
            <person name="Conway J.F."/>
            <person name="Steven A.C."/>
        </authorList>
    </citation>
    <scope>FUNCTION</scope>
    <scope>SUBUNIT</scope>
</reference>
<dbReference type="EMBL" id="AF158101">
    <property type="protein sequence ID" value="AAD42457.1"/>
    <property type="molecule type" value="Genomic_DNA"/>
</dbReference>
<dbReference type="EMBL" id="X15818">
    <property type="protein sequence ID" value="CAA33811.2"/>
    <property type="molecule type" value="Genomic_DNA"/>
</dbReference>
<dbReference type="PIR" id="JT0576">
    <property type="entry name" value="GUBPT4"/>
</dbReference>
<dbReference type="RefSeq" id="NP_049860.1">
    <property type="nucleotide sequence ID" value="NC_000866.4"/>
</dbReference>
<dbReference type="PDB" id="4UXE">
    <property type="method" value="X-ray"/>
    <property type="resolution" value="2.00 A"/>
    <property type="chains" value="A/B/C=894-1289"/>
</dbReference>
<dbReference type="PDB" id="4UXF">
    <property type="method" value="X-ray"/>
    <property type="resolution" value="2.00 A"/>
    <property type="chains" value="A/B/C=894-1289"/>
</dbReference>
<dbReference type="PDB" id="4UXG">
    <property type="method" value="X-ray"/>
    <property type="resolution" value="3.00 A"/>
    <property type="chains" value="A/B/C/D/E/F/G/H/I/J/K/L=894-1289"/>
</dbReference>
<dbReference type="PDB" id="5NXF">
    <property type="method" value="X-ray"/>
    <property type="resolution" value="1.90 A"/>
    <property type="chains" value="A/B/C=781-1289"/>
</dbReference>
<dbReference type="PDB" id="5NXH">
    <property type="method" value="X-ray"/>
    <property type="resolution" value="2.89 A"/>
    <property type="chains" value="A/B/C=726-1289"/>
</dbReference>
<dbReference type="PDBsum" id="4UXE"/>
<dbReference type="PDBsum" id="4UXF"/>
<dbReference type="PDBsum" id="4UXG"/>
<dbReference type="PDBsum" id="5NXF"/>
<dbReference type="PDBsum" id="5NXH"/>
<dbReference type="SMR" id="P18771"/>
<dbReference type="GeneID" id="1258754"/>
<dbReference type="KEGG" id="vg:1258754"/>
<dbReference type="EvolutionaryTrace" id="P18771"/>
<dbReference type="Proteomes" id="UP000009087">
    <property type="component" value="Segment"/>
</dbReference>
<dbReference type="GO" id="GO:0098024">
    <property type="term" value="C:virus tail, fiber"/>
    <property type="evidence" value="ECO:0007669"/>
    <property type="project" value="UniProtKB-KW"/>
</dbReference>
<dbReference type="InterPro" id="IPR048391">
    <property type="entry name" value="Gp34_dom"/>
</dbReference>
<dbReference type="InterPro" id="IPR048390">
    <property type="entry name" value="Gp34_trimer"/>
</dbReference>
<dbReference type="Pfam" id="PF21560">
    <property type="entry name" value="Gp34_2nd"/>
    <property type="match status" value="1"/>
</dbReference>
<dbReference type="Pfam" id="PF21446">
    <property type="entry name" value="Gp34_trimer"/>
    <property type="match status" value="1"/>
</dbReference>
<comment type="function">
    <text evidence="1">Structural component of the proximal-half of the long-tail fiber. The long-tail fibers of T4 are about 1600 Angstroms long with a kink in the middle that divides the fiber into proximal and distal halves.</text>
</comment>
<comment type="subunit">
    <text evidence="1">The long-tail fibers are trimeric, with a stoichiometry of gp34/gp37/gp36/gp35 of 3:3:3:1.</text>
</comment>
<comment type="subcellular location">
    <subcellularLocation>
        <location evidence="2">Virion</location>
    </subcellularLocation>
</comment>
<comment type="similarity">
    <text evidence="2">Belongs to the tevenvirinae long-tail fiber proximal subunit protein family.</text>
</comment>
<gene>
    <name type="primary">34</name>
</gene>
<organismHost>
    <name type="scientific">Escherichia coli</name>
    <dbReference type="NCBI Taxonomy" id="562"/>
</organismHost>
<protein>
    <recommendedName>
        <fullName evidence="2">Long-tail fiber proximal subunit</fullName>
    </recommendedName>
    <alternativeName>
        <fullName evidence="2">Gene product 34</fullName>
        <shortName>gp34</shortName>
    </alternativeName>
</protein>
<accession>P18771</accession>
<organism>
    <name type="scientific">Enterobacteria phage T4</name>
    <name type="common">Bacteriophage T4</name>
    <dbReference type="NCBI Taxonomy" id="10665"/>
    <lineage>
        <taxon>Viruses</taxon>
        <taxon>Duplodnaviria</taxon>
        <taxon>Heunggongvirae</taxon>
        <taxon>Uroviricota</taxon>
        <taxon>Caudoviricetes</taxon>
        <taxon>Straboviridae</taxon>
        <taxon>Tevenvirinae</taxon>
        <taxon>Tequatrovirus</taxon>
    </lineage>
</organism>
<proteinExistence type="evidence at protein level"/>
<name>FIBP_BPT4</name>